<feature type="chain" id="PRO_0000162861" description="Thiazole synthase">
    <location>
        <begin position="1"/>
        <end position="255"/>
    </location>
</feature>
<feature type="active site" description="Schiff-base intermediate with DXP" evidence="1">
    <location>
        <position position="96"/>
    </location>
</feature>
<feature type="binding site" evidence="1">
    <location>
        <position position="157"/>
    </location>
    <ligand>
        <name>1-deoxy-D-xylulose 5-phosphate</name>
        <dbReference type="ChEBI" id="CHEBI:57792"/>
    </ligand>
</feature>
<feature type="binding site" evidence="1">
    <location>
        <begin position="183"/>
        <end position="184"/>
    </location>
    <ligand>
        <name>1-deoxy-D-xylulose 5-phosphate</name>
        <dbReference type="ChEBI" id="CHEBI:57792"/>
    </ligand>
</feature>
<feature type="binding site" evidence="1">
    <location>
        <begin position="205"/>
        <end position="206"/>
    </location>
    <ligand>
        <name>1-deoxy-D-xylulose 5-phosphate</name>
        <dbReference type="ChEBI" id="CHEBI:57792"/>
    </ligand>
</feature>
<evidence type="ECO:0000255" key="1">
    <source>
        <dbReference type="HAMAP-Rule" id="MF_00443"/>
    </source>
</evidence>
<name>THIG_STAEQ</name>
<comment type="function">
    <text evidence="1">Catalyzes the rearrangement of 1-deoxy-D-xylulose 5-phosphate (DXP) to produce the thiazole phosphate moiety of thiamine. Sulfur is provided by the thiocarboxylate moiety of the carrier protein ThiS. In vitro, sulfur can be provided by H(2)S.</text>
</comment>
<comment type="catalytic activity">
    <reaction evidence="1">
        <text>[ThiS sulfur-carrier protein]-C-terminal-Gly-aminoethanethioate + 2-iminoacetate + 1-deoxy-D-xylulose 5-phosphate = [ThiS sulfur-carrier protein]-C-terminal Gly-Gly + 2-[(2R,5Z)-2-carboxy-4-methylthiazol-5(2H)-ylidene]ethyl phosphate + 2 H2O + H(+)</text>
        <dbReference type="Rhea" id="RHEA:26297"/>
        <dbReference type="Rhea" id="RHEA-COMP:12909"/>
        <dbReference type="Rhea" id="RHEA-COMP:19908"/>
        <dbReference type="ChEBI" id="CHEBI:15377"/>
        <dbReference type="ChEBI" id="CHEBI:15378"/>
        <dbReference type="ChEBI" id="CHEBI:57792"/>
        <dbReference type="ChEBI" id="CHEBI:62899"/>
        <dbReference type="ChEBI" id="CHEBI:77846"/>
        <dbReference type="ChEBI" id="CHEBI:90778"/>
        <dbReference type="ChEBI" id="CHEBI:232372"/>
        <dbReference type="EC" id="2.8.1.10"/>
    </reaction>
</comment>
<comment type="pathway">
    <text evidence="1">Cofactor biosynthesis; thiamine diphosphate biosynthesis.</text>
</comment>
<comment type="subunit">
    <text evidence="1">Homotetramer. Forms heterodimers with either ThiH or ThiS.</text>
</comment>
<comment type="subcellular location">
    <subcellularLocation>
        <location evidence="1">Cytoplasm</location>
    </subcellularLocation>
</comment>
<comment type="similarity">
    <text evidence="1">Belongs to the ThiG family.</text>
</comment>
<accession>Q5HLB4</accession>
<organism>
    <name type="scientific">Staphylococcus epidermidis (strain ATCC 35984 / DSM 28319 / BCRC 17069 / CCUG 31568 / BM 3577 / RP62A)</name>
    <dbReference type="NCBI Taxonomy" id="176279"/>
    <lineage>
        <taxon>Bacteria</taxon>
        <taxon>Bacillati</taxon>
        <taxon>Bacillota</taxon>
        <taxon>Bacilli</taxon>
        <taxon>Bacillales</taxon>
        <taxon>Staphylococcaceae</taxon>
        <taxon>Staphylococcus</taxon>
    </lineage>
</organism>
<dbReference type="EC" id="2.8.1.10" evidence="1"/>
<dbReference type="EMBL" id="CP000029">
    <property type="protein sequence ID" value="AAW52935.1"/>
    <property type="molecule type" value="Genomic_DNA"/>
</dbReference>
<dbReference type="RefSeq" id="WP_010959282.1">
    <property type="nucleotide sequence ID" value="NC_002976.3"/>
</dbReference>
<dbReference type="SMR" id="Q5HLB4"/>
<dbReference type="STRING" id="176279.SERP2073"/>
<dbReference type="KEGG" id="ser:SERP2073"/>
<dbReference type="eggNOG" id="COG2022">
    <property type="taxonomic scope" value="Bacteria"/>
</dbReference>
<dbReference type="HOGENOM" id="CLU_062233_1_0_9"/>
<dbReference type="UniPathway" id="UPA00060"/>
<dbReference type="Proteomes" id="UP000000531">
    <property type="component" value="Chromosome"/>
</dbReference>
<dbReference type="GO" id="GO:0005737">
    <property type="term" value="C:cytoplasm"/>
    <property type="evidence" value="ECO:0007669"/>
    <property type="project" value="UniProtKB-SubCell"/>
</dbReference>
<dbReference type="GO" id="GO:1990107">
    <property type="term" value="F:thiazole synthase activity"/>
    <property type="evidence" value="ECO:0007669"/>
    <property type="project" value="UniProtKB-EC"/>
</dbReference>
<dbReference type="GO" id="GO:0009229">
    <property type="term" value="P:thiamine diphosphate biosynthetic process"/>
    <property type="evidence" value="ECO:0007669"/>
    <property type="project" value="UniProtKB-UniRule"/>
</dbReference>
<dbReference type="CDD" id="cd04728">
    <property type="entry name" value="ThiG"/>
    <property type="match status" value="1"/>
</dbReference>
<dbReference type="Gene3D" id="3.20.20.70">
    <property type="entry name" value="Aldolase class I"/>
    <property type="match status" value="1"/>
</dbReference>
<dbReference type="HAMAP" id="MF_00443">
    <property type="entry name" value="ThiG"/>
    <property type="match status" value="1"/>
</dbReference>
<dbReference type="InterPro" id="IPR013785">
    <property type="entry name" value="Aldolase_TIM"/>
</dbReference>
<dbReference type="InterPro" id="IPR033983">
    <property type="entry name" value="Thiazole_synthase_ThiG"/>
</dbReference>
<dbReference type="InterPro" id="IPR008867">
    <property type="entry name" value="ThiG"/>
</dbReference>
<dbReference type="PANTHER" id="PTHR34266">
    <property type="entry name" value="THIAZOLE SYNTHASE"/>
    <property type="match status" value="1"/>
</dbReference>
<dbReference type="PANTHER" id="PTHR34266:SF2">
    <property type="entry name" value="THIAZOLE SYNTHASE"/>
    <property type="match status" value="1"/>
</dbReference>
<dbReference type="Pfam" id="PF05690">
    <property type="entry name" value="ThiG"/>
    <property type="match status" value="1"/>
</dbReference>
<dbReference type="SUPFAM" id="SSF110399">
    <property type="entry name" value="ThiG-like"/>
    <property type="match status" value="1"/>
</dbReference>
<gene>
    <name evidence="1" type="primary">thiG</name>
    <name type="ordered locus">SERP2073</name>
</gene>
<protein>
    <recommendedName>
        <fullName evidence="1">Thiazole synthase</fullName>
        <ecNumber evidence="1">2.8.1.10</ecNumber>
    </recommendedName>
</protein>
<proteinExistence type="inferred from homology"/>
<sequence>MFKIGNLELQSRLLLGTGKFENEEVQSKAIEASETNVLTFAVRRMNLYDRNLPNPLANVNLKDFITFPNTAGAKTAQEAIRIAEIANHAGVCDMIKVEVIGDDETLLPDPFETYEVCKVLLEKGYTVCPYISNDLVLAQRLEELGVHAVMPLASPIGTGRGINNPLNLSYIIENASVPVIVDAGIGSPKDACHAMELGADGILLNTAISAAKDPVKMAEAMKLGINAGRLSYEAGRIPVKYTAQASSPSEGLGFL</sequence>
<reference key="1">
    <citation type="journal article" date="2005" name="J. Bacteriol.">
        <title>Insights on evolution of virulence and resistance from the complete genome analysis of an early methicillin-resistant Staphylococcus aureus strain and a biofilm-producing methicillin-resistant Staphylococcus epidermidis strain.</title>
        <authorList>
            <person name="Gill S.R."/>
            <person name="Fouts D.E."/>
            <person name="Archer G.L."/>
            <person name="Mongodin E.F."/>
            <person name="DeBoy R.T."/>
            <person name="Ravel J."/>
            <person name="Paulsen I.T."/>
            <person name="Kolonay J.F."/>
            <person name="Brinkac L.M."/>
            <person name="Beanan M.J."/>
            <person name="Dodson R.J."/>
            <person name="Daugherty S.C."/>
            <person name="Madupu R."/>
            <person name="Angiuoli S.V."/>
            <person name="Durkin A.S."/>
            <person name="Haft D.H."/>
            <person name="Vamathevan J.J."/>
            <person name="Khouri H."/>
            <person name="Utterback T.R."/>
            <person name="Lee C."/>
            <person name="Dimitrov G."/>
            <person name="Jiang L."/>
            <person name="Qin H."/>
            <person name="Weidman J."/>
            <person name="Tran K."/>
            <person name="Kang K.H."/>
            <person name="Hance I.R."/>
            <person name="Nelson K.E."/>
            <person name="Fraser C.M."/>
        </authorList>
    </citation>
    <scope>NUCLEOTIDE SEQUENCE [LARGE SCALE GENOMIC DNA]</scope>
    <source>
        <strain>ATCC 35984 / DSM 28319 / BCRC 17069 / CCUG 31568 / BM 3577 / RP62A</strain>
    </source>
</reference>
<keyword id="KW-0963">Cytoplasm</keyword>
<keyword id="KW-1185">Reference proteome</keyword>
<keyword id="KW-0704">Schiff base</keyword>
<keyword id="KW-0784">Thiamine biosynthesis</keyword>
<keyword id="KW-0808">Transferase</keyword>